<sequence>MDYELLKRLDPEVFEAIANETRRQTETLELIASENFTSTAVMEACGSVMTNKYAEGYPGKRYYGGCEFVDVAENLARDRAKKLFGCEYVNVQPHSGSSANMAVLFAVLKPGDSIMGLDLSHGGHLTHGSKVNFSGQFFDAHSYGVDKETGIIDMNAVEEMALKVKPKLIITGASAYSQGFDFKAFREIADKVGAFLMADIAHPAGLVAAGLSANPVPHCHFVTTTTHKTLRGPRGGMIMMGKDFENPMGITVNTKNGPRVKMMSEVIDAEVMPGIQGGPLMHIIAGKAVAFGEALQPEFKAYAQQIKDNAAAMAAKFLAADYHIVSGGTKNHLMLLDLRNKNVNGKVAENLLHDAGITVNKNMVPFDDKSPFVTSGIRVGTPAMTTRGMKVAEAEKIVEFIDRVISAANDDNVADVCKQVRAEVRELCLQFPLNGYGLQV</sequence>
<keyword id="KW-0028">Amino-acid biosynthesis</keyword>
<keyword id="KW-0963">Cytoplasm</keyword>
<keyword id="KW-0554">One-carbon metabolism</keyword>
<keyword id="KW-0663">Pyridoxal phosphate</keyword>
<keyword id="KW-0808">Transferase</keyword>
<gene>
    <name evidence="1" type="primary">glyA</name>
    <name type="ordered locus">Cpar_1518</name>
</gene>
<reference key="1">
    <citation type="submission" date="2008-06" db="EMBL/GenBank/DDBJ databases">
        <title>Complete sequence of Chlorobaculum parvum NCIB 8327.</title>
        <authorList>
            <consortium name="US DOE Joint Genome Institute"/>
            <person name="Lucas S."/>
            <person name="Copeland A."/>
            <person name="Lapidus A."/>
            <person name="Glavina del Rio T."/>
            <person name="Dalin E."/>
            <person name="Tice H."/>
            <person name="Bruce D."/>
            <person name="Goodwin L."/>
            <person name="Pitluck S."/>
            <person name="Schmutz J."/>
            <person name="Larimer F."/>
            <person name="Land M."/>
            <person name="Hauser L."/>
            <person name="Kyrpides N."/>
            <person name="Mikhailova N."/>
            <person name="Zhao F."/>
            <person name="Li T."/>
            <person name="Liu Z."/>
            <person name="Overmann J."/>
            <person name="Bryant D.A."/>
            <person name="Richardson P."/>
        </authorList>
    </citation>
    <scope>NUCLEOTIDE SEQUENCE [LARGE SCALE GENOMIC DNA]</scope>
    <source>
        <strain>DSM 263 / NCIMB 8327</strain>
    </source>
</reference>
<comment type="function">
    <text evidence="1">Catalyzes the reversible interconversion of serine and glycine with tetrahydrofolate (THF) serving as the one-carbon carrier. This reaction serves as the major source of one-carbon groups required for the biosynthesis of purines, thymidylate, methionine, and other important biomolecules. Also exhibits THF-independent aldolase activity toward beta-hydroxyamino acids, producing glycine and aldehydes, via a retro-aldol mechanism.</text>
</comment>
<comment type="catalytic activity">
    <reaction evidence="1">
        <text>(6R)-5,10-methylene-5,6,7,8-tetrahydrofolate + glycine + H2O = (6S)-5,6,7,8-tetrahydrofolate + L-serine</text>
        <dbReference type="Rhea" id="RHEA:15481"/>
        <dbReference type="ChEBI" id="CHEBI:15377"/>
        <dbReference type="ChEBI" id="CHEBI:15636"/>
        <dbReference type="ChEBI" id="CHEBI:33384"/>
        <dbReference type="ChEBI" id="CHEBI:57305"/>
        <dbReference type="ChEBI" id="CHEBI:57453"/>
        <dbReference type="EC" id="2.1.2.1"/>
    </reaction>
</comment>
<comment type="cofactor">
    <cofactor evidence="1">
        <name>pyridoxal 5'-phosphate</name>
        <dbReference type="ChEBI" id="CHEBI:597326"/>
    </cofactor>
</comment>
<comment type="pathway">
    <text evidence="1">One-carbon metabolism; tetrahydrofolate interconversion.</text>
</comment>
<comment type="pathway">
    <text evidence="1">Amino-acid biosynthesis; glycine biosynthesis; glycine from L-serine: step 1/1.</text>
</comment>
<comment type="subunit">
    <text evidence="1">Homodimer.</text>
</comment>
<comment type="subcellular location">
    <subcellularLocation>
        <location evidence="1">Cytoplasm</location>
    </subcellularLocation>
</comment>
<comment type="similarity">
    <text evidence="1">Belongs to the SHMT family.</text>
</comment>
<evidence type="ECO:0000255" key="1">
    <source>
        <dbReference type="HAMAP-Rule" id="MF_00051"/>
    </source>
</evidence>
<organism>
    <name type="scientific">Chlorobaculum parvum (strain DSM 263 / NCIMB 8327)</name>
    <name type="common">Chlorobium vibrioforme subsp. thiosulfatophilum</name>
    <dbReference type="NCBI Taxonomy" id="517417"/>
    <lineage>
        <taxon>Bacteria</taxon>
        <taxon>Pseudomonadati</taxon>
        <taxon>Chlorobiota</taxon>
        <taxon>Chlorobiia</taxon>
        <taxon>Chlorobiales</taxon>
        <taxon>Chlorobiaceae</taxon>
        <taxon>Chlorobaculum</taxon>
    </lineage>
</organism>
<feature type="chain" id="PRO_1000091525" description="Serine hydroxymethyltransferase">
    <location>
        <begin position="1"/>
        <end position="440"/>
    </location>
</feature>
<feature type="binding site" evidence="1">
    <location>
        <position position="119"/>
    </location>
    <ligand>
        <name>(6S)-5,6,7,8-tetrahydrofolate</name>
        <dbReference type="ChEBI" id="CHEBI:57453"/>
    </ligand>
</feature>
<feature type="binding site" evidence="1">
    <location>
        <begin position="123"/>
        <end position="125"/>
    </location>
    <ligand>
        <name>(6S)-5,6,7,8-tetrahydrofolate</name>
        <dbReference type="ChEBI" id="CHEBI:57453"/>
    </ligand>
</feature>
<feature type="binding site" evidence="1">
    <location>
        <begin position="370"/>
        <end position="372"/>
    </location>
    <ligand>
        <name>(6S)-5,6,7,8-tetrahydrofolate</name>
        <dbReference type="ChEBI" id="CHEBI:57453"/>
    </ligand>
</feature>
<feature type="site" description="Plays an important role in substrate specificity" evidence="1">
    <location>
        <position position="227"/>
    </location>
</feature>
<feature type="modified residue" description="N6-(pyridoxal phosphate)lysine" evidence="1">
    <location>
        <position position="228"/>
    </location>
</feature>
<protein>
    <recommendedName>
        <fullName evidence="1">Serine hydroxymethyltransferase</fullName>
        <shortName evidence="1">SHMT</shortName>
        <shortName evidence="1">Serine methylase</shortName>
        <ecNumber evidence="1">2.1.2.1</ecNumber>
    </recommendedName>
</protein>
<proteinExistence type="inferred from homology"/>
<name>GLYA_CHLP8</name>
<dbReference type="EC" id="2.1.2.1" evidence="1"/>
<dbReference type="EMBL" id="CP001099">
    <property type="protein sequence ID" value="ACF11916.1"/>
    <property type="molecule type" value="Genomic_DNA"/>
</dbReference>
<dbReference type="RefSeq" id="WP_012502749.1">
    <property type="nucleotide sequence ID" value="NC_011027.1"/>
</dbReference>
<dbReference type="SMR" id="B3QPR3"/>
<dbReference type="STRING" id="517417.Cpar_1518"/>
<dbReference type="KEGG" id="cpc:Cpar_1518"/>
<dbReference type="eggNOG" id="COG0112">
    <property type="taxonomic scope" value="Bacteria"/>
</dbReference>
<dbReference type="HOGENOM" id="CLU_022477_2_1_10"/>
<dbReference type="OrthoDB" id="9803846at2"/>
<dbReference type="UniPathway" id="UPA00193"/>
<dbReference type="UniPathway" id="UPA00288">
    <property type="reaction ID" value="UER01023"/>
</dbReference>
<dbReference type="Proteomes" id="UP000008811">
    <property type="component" value="Chromosome"/>
</dbReference>
<dbReference type="GO" id="GO:0005829">
    <property type="term" value="C:cytosol"/>
    <property type="evidence" value="ECO:0007669"/>
    <property type="project" value="TreeGrafter"/>
</dbReference>
<dbReference type="GO" id="GO:0004372">
    <property type="term" value="F:glycine hydroxymethyltransferase activity"/>
    <property type="evidence" value="ECO:0007669"/>
    <property type="project" value="UniProtKB-UniRule"/>
</dbReference>
<dbReference type="GO" id="GO:0030170">
    <property type="term" value="F:pyridoxal phosphate binding"/>
    <property type="evidence" value="ECO:0007669"/>
    <property type="project" value="UniProtKB-UniRule"/>
</dbReference>
<dbReference type="GO" id="GO:0019264">
    <property type="term" value="P:glycine biosynthetic process from serine"/>
    <property type="evidence" value="ECO:0007669"/>
    <property type="project" value="UniProtKB-UniRule"/>
</dbReference>
<dbReference type="GO" id="GO:0035999">
    <property type="term" value="P:tetrahydrofolate interconversion"/>
    <property type="evidence" value="ECO:0007669"/>
    <property type="project" value="UniProtKB-UniRule"/>
</dbReference>
<dbReference type="CDD" id="cd00378">
    <property type="entry name" value="SHMT"/>
    <property type="match status" value="1"/>
</dbReference>
<dbReference type="FunFam" id="3.40.640.10:FF:000001">
    <property type="entry name" value="Serine hydroxymethyltransferase"/>
    <property type="match status" value="1"/>
</dbReference>
<dbReference type="Gene3D" id="3.90.1150.10">
    <property type="entry name" value="Aspartate Aminotransferase, domain 1"/>
    <property type="match status" value="1"/>
</dbReference>
<dbReference type="Gene3D" id="3.40.640.10">
    <property type="entry name" value="Type I PLP-dependent aspartate aminotransferase-like (Major domain)"/>
    <property type="match status" value="1"/>
</dbReference>
<dbReference type="HAMAP" id="MF_00051">
    <property type="entry name" value="SHMT"/>
    <property type="match status" value="1"/>
</dbReference>
<dbReference type="InterPro" id="IPR015424">
    <property type="entry name" value="PyrdxlP-dep_Trfase"/>
</dbReference>
<dbReference type="InterPro" id="IPR015421">
    <property type="entry name" value="PyrdxlP-dep_Trfase_major"/>
</dbReference>
<dbReference type="InterPro" id="IPR015422">
    <property type="entry name" value="PyrdxlP-dep_Trfase_small"/>
</dbReference>
<dbReference type="InterPro" id="IPR001085">
    <property type="entry name" value="Ser_HO-MeTrfase"/>
</dbReference>
<dbReference type="InterPro" id="IPR049943">
    <property type="entry name" value="Ser_HO-MeTrfase-like"/>
</dbReference>
<dbReference type="InterPro" id="IPR019798">
    <property type="entry name" value="Ser_HO-MeTrfase_PLP_BS"/>
</dbReference>
<dbReference type="InterPro" id="IPR039429">
    <property type="entry name" value="SHMT-like_dom"/>
</dbReference>
<dbReference type="NCBIfam" id="NF000586">
    <property type="entry name" value="PRK00011.1"/>
    <property type="match status" value="1"/>
</dbReference>
<dbReference type="PANTHER" id="PTHR11680">
    <property type="entry name" value="SERINE HYDROXYMETHYLTRANSFERASE"/>
    <property type="match status" value="1"/>
</dbReference>
<dbReference type="PANTHER" id="PTHR11680:SF35">
    <property type="entry name" value="SERINE HYDROXYMETHYLTRANSFERASE 1"/>
    <property type="match status" value="1"/>
</dbReference>
<dbReference type="Pfam" id="PF00464">
    <property type="entry name" value="SHMT"/>
    <property type="match status" value="1"/>
</dbReference>
<dbReference type="PIRSF" id="PIRSF000412">
    <property type="entry name" value="SHMT"/>
    <property type="match status" value="1"/>
</dbReference>
<dbReference type="SUPFAM" id="SSF53383">
    <property type="entry name" value="PLP-dependent transferases"/>
    <property type="match status" value="1"/>
</dbReference>
<dbReference type="PROSITE" id="PS00096">
    <property type="entry name" value="SHMT"/>
    <property type="match status" value="1"/>
</dbReference>
<accession>B3QPR3</accession>